<proteinExistence type="evidence at protein level"/>
<comment type="function">
    <text evidence="6">Catalyzes the formation of S-adenosylmethionine from methionine and ATP.</text>
</comment>
<comment type="catalytic activity">
    <reaction evidence="6">
        <text>L-methionine + ATP + H2O = S-adenosyl-L-methionine + phosphate + diphosphate</text>
        <dbReference type="Rhea" id="RHEA:21080"/>
        <dbReference type="ChEBI" id="CHEBI:15377"/>
        <dbReference type="ChEBI" id="CHEBI:30616"/>
        <dbReference type="ChEBI" id="CHEBI:33019"/>
        <dbReference type="ChEBI" id="CHEBI:43474"/>
        <dbReference type="ChEBI" id="CHEBI:57844"/>
        <dbReference type="ChEBI" id="CHEBI:59789"/>
        <dbReference type="EC" id="2.5.1.6"/>
    </reaction>
    <physiologicalReaction direction="left-to-right" evidence="6">
        <dbReference type="Rhea" id="RHEA:21081"/>
    </physiologicalReaction>
</comment>
<comment type="cofactor">
    <cofactor evidence="4">
        <name>Mn(2+)</name>
        <dbReference type="ChEBI" id="CHEBI:29035"/>
    </cofactor>
    <cofactor evidence="4">
        <name>Mg(2+)</name>
        <dbReference type="ChEBI" id="CHEBI:18420"/>
    </cofactor>
    <cofactor evidence="4">
        <name>Co(2+)</name>
        <dbReference type="ChEBI" id="CHEBI:48828"/>
    </cofactor>
    <text evidence="4">Binds 2 divalent ions per subunit (By similarity). The metal ions interact primarily with the substrate (By similarity). Can utilize magnesium, manganese or cobalt (in vitro) (By similarity).</text>
</comment>
<comment type="cofactor">
    <cofactor evidence="4">
        <name>K(+)</name>
        <dbReference type="ChEBI" id="CHEBI:29103"/>
    </cofactor>
    <text evidence="4">Binds 1 potassium ion per subunit (By similarity). The potassium ion interacts primarily with the substrate (By similarity).</text>
</comment>
<comment type="activity regulation">
    <text evidence="6">Increased activity in the presence of 25 percent acetonitrile, methanol or dimethylformamide.</text>
</comment>
<comment type="biophysicochemical properties">
    <kinetics>
        <KM evidence="6">1.44 mM for L-methionine (at 50 degrees Celsius)</KM>
        <KM evidence="6">0.51 mM for L-methionine (at 35 degrees Celsius)</KM>
        <Vmax evidence="6">170.0 umol/min/g enzyme with L-methionine as substrate (at 50 degrees Celsius)</Vmax>
        <Vmax evidence="6">222.0 umol/min/g enzyme with L-methionine as substrate (at 35 degrees Celsius)</Vmax>
        <text evidence="6">kcat is 1.29 sec(-1) with L-methionine as substrate (at 50 degrees Celsius) (PubMed:38631157). kcat is 1.69 sec(-1) with L-methionine as substrate (at 35 degrees Celsius) (PubMed:38631157). Thermoalkaliphic enzyme which tolerates conditions up to 3 M KCl (PubMed:38631157).</text>
    </kinetics>
    <phDependence>
        <text evidence="6">Optimum pH is 8.5-10.5 (PubMed:38631157). Thermoalkaliphic enzyme which tolerates conditions from 6 up to pH 10.5 (PubMed:38631157).</text>
    </phDependence>
    <temperatureDependence>
        <text evidence="6">Optimum temperature is 50 degrees Celsius (PubMed:38631157). Thermoalkaliphic enzyme which tolerates conditions from 40 up to 55 degrees Celsius (PubMed:38631157).</text>
    </temperatureDependence>
</comment>
<comment type="pathway">
    <text evidence="6">Amino-acid biosynthesis; S-adenosyl-L-methionine biosynthesis; S-adenosyl-L-methionine from L-methionine: step 1/1.</text>
</comment>
<comment type="subunit">
    <text evidence="3">Homotetramer; dimer of dimers.</text>
</comment>
<comment type="subcellular location">
    <subcellularLocation>
        <location evidence="5">Cytoplasm</location>
    </subcellularLocation>
</comment>
<comment type="similarity">
    <text evidence="8">Belongs to the AdoMet synthase family.</text>
</comment>
<evidence type="ECO:0000250" key="1">
    <source>
        <dbReference type="UniProtKB" id="P0A817"/>
    </source>
</evidence>
<evidence type="ECO:0000250" key="2">
    <source>
        <dbReference type="UniProtKB" id="P13444"/>
    </source>
</evidence>
<evidence type="ECO:0000250" key="3">
    <source>
        <dbReference type="UniProtKB" id="Q00266"/>
    </source>
</evidence>
<evidence type="ECO:0000250" key="4">
    <source>
        <dbReference type="UniProtKB" id="Q96551"/>
    </source>
</evidence>
<evidence type="ECO:0000250" key="5">
    <source>
        <dbReference type="UniProtKB" id="Q9LUT2"/>
    </source>
</evidence>
<evidence type="ECO:0000269" key="6">
    <source>
    </source>
</evidence>
<evidence type="ECO:0000303" key="7">
    <source>
    </source>
</evidence>
<evidence type="ECO:0000305" key="8"/>
<dbReference type="EC" id="2.5.1.6" evidence="6"/>
<dbReference type="EMBL" id="ON638997">
    <property type="protein sequence ID" value="UZT04310.1"/>
    <property type="molecule type" value="mRNA"/>
</dbReference>
<dbReference type="SMR" id="A0A9E8G339"/>
<dbReference type="UniPathway" id="UPA00315">
    <property type="reaction ID" value="UER00080"/>
</dbReference>
<dbReference type="GO" id="GO:0005737">
    <property type="term" value="C:cytoplasm"/>
    <property type="evidence" value="ECO:0007669"/>
    <property type="project" value="UniProtKB-SubCell"/>
</dbReference>
<dbReference type="GO" id="GO:0005524">
    <property type="term" value="F:ATP binding"/>
    <property type="evidence" value="ECO:0007669"/>
    <property type="project" value="UniProtKB-KW"/>
</dbReference>
<dbReference type="GO" id="GO:0046872">
    <property type="term" value="F:metal ion binding"/>
    <property type="evidence" value="ECO:0007669"/>
    <property type="project" value="UniProtKB-KW"/>
</dbReference>
<dbReference type="GO" id="GO:0004478">
    <property type="term" value="F:methionine adenosyltransferase activity"/>
    <property type="evidence" value="ECO:0007669"/>
    <property type="project" value="InterPro"/>
</dbReference>
<dbReference type="GO" id="GO:0006730">
    <property type="term" value="P:one-carbon metabolic process"/>
    <property type="evidence" value="ECO:0007669"/>
    <property type="project" value="UniProtKB-KW"/>
</dbReference>
<dbReference type="GO" id="GO:0006556">
    <property type="term" value="P:S-adenosylmethionine biosynthetic process"/>
    <property type="evidence" value="ECO:0007669"/>
    <property type="project" value="InterPro"/>
</dbReference>
<dbReference type="CDD" id="cd18079">
    <property type="entry name" value="S-AdoMet_synt"/>
    <property type="match status" value="1"/>
</dbReference>
<dbReference type="FunFam" id="3.30.300.10:FF:000003">
    <property type="entry name" value="S-adenosylmethionine synthase"/>
    <property type="match status" value="1"/>
</dbReference>
<dbReference type="FunFam" id="3.30.300.10:FF:000004">
    <property type="entry name" value="S-adenosylmethionine synthase"/>
    <property type="match status" value="1"/>
</dbReference>
<dbReference type="FunFam" id="3.30.300.10:FF:000011">
    <property type="entry name" value="S-adenosylmethionine synthase"/>
    <property type="match status" value="1"/>
</dbReference>
<dbReference type="FunFam" id="3.30.300.10:FF:000021">
    <property type="entry name" value="S-adenosylmethionine synthetase 1"/>
    <property type="match status" value="1"/>
</dbReference>
<dbReference type="Gene3D" id="3.30.300.10">
    <property type="match status" value="3"/>
</dbReference>
<dbReference type="HAMAP" id="MF_00086">
    <property type="entry name" value="S_AdoMet_synth1"/>
    <property type="match status" value="1"/>
</dbReference>
<dbReference type="InterPro" id="IPR022631">
    <property type="entry name" value="ADOMET_SYNTHASE_CS"/>
</dbReference>
<dbReference type="InterPro" id="IPR022630">
    <property type="entry name" value="S-AdoMet_synt_C"/>
</dbReference>
<dbReference type="InterPro" id="IPR022629">
    <property type="entry name" value="S-AdoMet_synt_central"/>
</dbReference>
<dbReference type="InterPro" id="IPR022628">
    <property type="entry name" value="S-AdoMet_synt_N"/>
</dbReference>
<dbReference type="InterPro" id="IPR002133">
    <property type="entry name" value="S-AdoMet_synthetase"/>
</dbReference>
<dbReference type="InterPro" id="IPR022636">
    <property type="entry name" value="S-AdoMet_synthetase_sfam"/>
</dbReference>
<dbReference type="NCBIfam" id="TIGR01034">
    <property type="entry name" value="metK"/>
    <property type="match status" value="1"/>
</dbReference>
<dbReference type="PANTHER" id="PTHR11964">
    <property type="entry name" value="S-ADENOSYLMETHIONINE SYNTHETASE"/>
    <property type="match status" value="1"/>
</dbReference>
<dbReference type="Pfam" id="PF02773">
    <property type="entry name" value="S-AdoMet_synt_C"/>
    <property type="match status" value="1"/>
</dbReference>
<dbReference type="Pfam" id="PF02772">
    <property type="entry name" value="S-AdoMet_synt_M"/>
    <property type="match status" value="1"/>
</dbReference>
<dbReference type="Pfam" id="PF00438">
    <property type="entry name" value="S-AdoMet_synt_N"/>
    <property type="match status" value="1"/>
</dbReference>
<dbReference type="PIRSF" id="PIRSF000497">
    <property type="entry name" value="MAT"/>
    <property type="match status" value="1"/>
</dbReference>
<dbReference type="SUPFAM" id="SSF55973">
    <property type="entry name" value="S-adenosylmethionine synthetase"/>
    <property type="match status" value="3"/>
</dbReference>
<dbReference type="PROSITE" id="PS00376">
    <property type="entry name" value="ADOMET_SYNTHASE_1"/>
    <property type="match status" value="1"/>
</dbReference>
<dbReference type="PROSITE" id="PS00377">
    <property type="entry name" value="ADOMET_SYNTHASE_2"/>
    <property type="match status" value="1"/>
</dbReference>
<protein>
    <recommendedName>
        <fullName evidence="7">S-adenosylmethionine synthase</fullName>
        <shortName evidence="7">AdoMet synthase</shortName>
        <shortName evidence="7">SAM-synthetase</shortName>
        <ecNumber evidence="6">2.5.1.6</ecNumber>
    </recommendedName>
</protein>
<name>KSAMS_ACAKO</name>
<gene>
    <name evidence="7" type="primary">KSAMS</name>
</gene>
<sequence length="393" mass="43180">METFLYTSESVNEGHPDKLCDQISDAVLDACLEQDPDSKVACETCTKTNMVMVFGEITTKANVDYEKIVRNTCRNIGFVSDDVGLDADNCKVLVNIEQQSPDIAQGVHGHLTKRPEEIGAGDQGHMFGYATDETPELMPLSHVLATKLGARLTEVRKNGTCPWLRPDGKTQVTVEYYNDKGAMVPIRVHTVLISTQHDETVTNDEIAADLKEHVIKPVIPEKYLDEKTIFHLNPSGRFVIGGPHGDAGLTGRKIIIDTYGGWGAHGGGAFSGKDPTKVDRSGAYIVRQAAKSIVANGLARRCLVQVSYAIGVPEPLSVFVDSYGTGKIPDKEILKIVKENFDFRPGMISIHLDLKRGGNGRFLKTAAYGHFGREDPDFTWETVKPLKWEKPQA</sequence>
<feature type="chain" id="PRO_0000461105" description="S-adenosylmethionine synthase">
    <location>
        <begin position="1"/>
        <end position="393"/>
    </location>
</feature>
<feature type="binding site" evidence="2">
    <location>
        <position position="9"/>
    </location>
    <ligand>
        <name>Mg(2+)</name>
        <dbReference type="ChEBI" id="CHEBI:18420"/>
    </ligand>
</feature>
<feature type="binding site" description="in other chain" evidence="3">
    <location>
        <position position="15"/>
    </location>
    <ligand>
        <name>ATP</name>
        <dbReference type="ChEBI" id="CHEBI:30616"/>
        <note>ligand shared between two neighboring subunits</note>
    </ligand>
</feature>
<feature type="binding site" evidence="2">
    <location>
        <position position="17"/>
    </location>
    <ligand>
        <name>Mg(2+)</name>
        <dbReference type="ChEBI" id="CHEBI:18420"/>
    </ligand>
</feature>
<feature type="binding site" evidence="1">
    <location>
        <position position="43"/>
    </location>
    <ligand>
        <name>K(+)</name>
        <dbReference type="ChEBI" id="CHEBI:29103"/>
    </ligand>
</feature>
<feature type="binding site" description="in other chain" evidence="1">
    <location>
        <position position="56"/>
    </location>
    <ligand>
        <name>L-methionine</name>
        <dbReference type="ChEBI" id="CHEBI:57844"/>
        <note>ligand shared between two neighboring subunits</note>
    </ligand>
</feature>
<feature type="binding site" description="in other chain" evidence="1">
    <location>
        <position position="99"/>
    </location>
    <ligand>
        <name>L-methionine</name>
        <dbReference type="ChEBI" id="CHEBI:57844"/>
        <note>ligand shared between two neighboring subunits</note>
    </ligand>
</feature>
<feature type="binding site" description="in other chain" evidence="3">
    <location>
        <begin position="167"/>
        <end position="169"/>
    </location>
    <ligand>
        <name>ATP</name>
        <dbReference type="ChEBI" id="CHEBI:30616"/>
        <note>ligand shared between two neighboring subunits</note>
    </ligand>
</feature>
<feature type="binding site" description="in other chain" evidence="3">
    <location>
        <begin position="235"/>
        <end position="238"/>
    </location>
    <ligand>
        <name>ATP</name>
        <dbReference type="ChEBI" id="CHEBI:30616"/>
        <note>ligand shared between two neighboring subunits</note>
    </ligand>
</feature>
<feature type="binding site" description="in other chain" evidence="3">
    <location>
        <position position="246"/>
    </location>
    <ligand>
        <name>ATP</name>
        <dbReference type="ChEBI" id="CHEBI:30616"/>
        <note>ligand shared between two neighboring subunits</note>
    </ligand>
</feature>
<feature type="binding site" evidence="1">
    <location>
        <position position="246"/>
    </location>
    <ligand>
        <name>L-methionine</name>
        <dbReference type="ChEBI" id="CHEBI:57844"/>
        <note>ligand shared between two neighboring subunits</note>
    </ligand>
</feature>
<feature type="binding site" description="in other chain" evidence="1">
    <location>
        <begin position="252"/>
        <end position="253"/>
    </location>
    <ligand>
        <name>ATP</name>
        <dbReference type="ChEBI" id="CHEBI:30616"/>
        <note>ligand shared between two neighboring subunits</note>
    </ligand>
</feature>
<feature type="binding site" evidence="1">
    <location>
        <position position="269"/>
    </location>
    <ligand>
        <name>ATP</name>
        <dbReference type="ChEBI" id="CHEBI:30616"/>
        <note>ligand shared between two neighboring subunits</note>
    </ligand>
</feature>
<feature type="binding site" evidence="1">
    <location>
        <position position="273"/>
    </location>
    <ligand>
        <name>ATP</name>
        <dbReference type="ChEBI" id="CHEBI:30616"/>
        <note>ligand shared between two neighboring subunits</note>
    </ligand>
</feature>
<feature type="binding site" evidence="2">
    <location>
        <position position="277"/>
    </location>
    <ligand>
        <name>ATP</name>
        <dbReference type="ChEBI" id="CHEBI:30616"/>
        <note>ligand shared between two neighboring subunits</note>
    </ligand>
</feature>
<feature type="binding site" description="in other chain" evidence="1">
    <location>
        <position position="277"/>
    </location>
    <ligand>
        <name>L-methionine</name>
        <dbReference type="ChEBI" id="CHEBI:57844"/>
        <note>ligand shared between two neighboring subunits</note>
    </ligand>
</feature>
<feature type="mutagenesis site" description="Reduced activity at 35 degrees Celsius and lost activity at 50 degrees Celsius." evidence="6">
    <original>Y</original>
    <variation>A</variation>
    <location>
        <position position="65"/>
    </location>
</feature>
<feature type="mutagenesis site" description="Lost activity." evidence="6">
    <original>Y</original>
    <variation>V</variation>
    <location>
        <position position="65"/>
    </location>
</feature>
<feature type="mutagenesis site" description="Slightly reduced activity at 35 degrees Celsius, but lost activity at 50 degrees Celsius." evidence="6">
    <original>I</original>
    <variation>A</variation>
    <location>
        <position position="193"/>
    </location>
</feature>
<feature type="mutagenesis site" description="Normal activity at 35 degrees Celsius, but lost activity at 50 degrees Celsius." evidence="6">
    <original>I</original>
    <variation>V</variation>
    <location>
        <position position="193"/>
    </location>
</feature>
<keyword id="KW-0067">ATP-binding</keyword>
<keyword id="KW-0170">Cobalt</keyword>
<keyword id="KW-0963">Cytoplasm</keyword>
<keyword id="KW-0460">Magnesium</keyword>
<keyword id="KW-0479">Metal-binding</keyword>
<keyword id="KW-0547">Nucleotide-binding</keyword>
<keyword id="KW-0554">One-carbon metabolism</keyword>
<keyword id="KW-0630">Potassium</keyword>
<keyword id="KW-0808">Transferase</keyword>
<organism>
    <name type="scientific">Acacia koa</name>
    <name type="common">Koa tree</name>
    <dbReference type="NCBI Taxonomy" id="468172"/>
    <lineage>
        <taxon>Eukaryota</taxon>
        <taxon>Viridiplantae</taxon>
        <taxon>Streptophyta</taxon>
        <taxon>Embryophyta</taxon>
        <taxon>Tracheophyta</taxon>
        <taxon>Spermatophyta</taxon>
        <taxon>Magnoliopsida</taxon>
        <taxon>eudicotyledons</taxon>
        <taxon>Gunneridae</taxon>
        <taxon>Pentapetalae</taxon>
        <taxon>rosids</taxon>
        <taxon>fabids</taxon>
        <taxon>Fabales</taxon>
        <taxon>Fabaceae</taxon>
        <taxon>Caesalpinioideae</taxon>
        <taxon>mimosoid clade</taxon>
        <taxon>Acacieae</taxon>
        <taxon>Acacia</taxon>
    </lineage>
</organism>
<accession>A0A9E8G339</accession>
<reference key="1">
    <citation type="journal article" date="2024" name="Plant Physiol. Biochem.">
        <title>Characterization of a plant S-adenosylmethionine synthetase from Acacia koa.</title>
        <authorList>
            <person name="Carrillo J.T."/>
            <person name="Borthakur D."/>
        </authorList>
    </citation>
    <scope>NUCLEOTIDE SEQUENCE [MRNA]</scope>
    <scope>FUNCTION</scope>
    <scope>MUTAGENESIS OF TYR-65 AND ILE-193</scope>
    <scope>CATALYTIC ACTIVITY</scope>
    <scope>PATHWAY</scope>
    <scope>BIOPHYSICOCHEMICAL PROPERTIES</scope>
    <scope>ACTIVITY REGULATION</scope>
</reference>